<evidence type="ECO:0000255" key="1">
    <source>
        <dbReference type="HAMAP-Rule" id="MF_01306"/>
    </source>
</evidence>
<evidence type="ECO:0000305" key="2"/>
<comment type="function">
    <text evidence="1">One of the primary rRNA binding proteins, it binds directly to 16S rRNA where it nucleates assembly of the body of the 30S subunit.</text>
</comment>
<comment type="function">
    <text evidence="1">With S5 and S12 plays an important role in translational accuracy.</text>
</comment>
<comment type="subunit">
    <text evidence="1">Part of the 30S ribosomal subunit. Contacts protein S5. The interaction surface between S4 and S5 is involved in control of translational fidelity.</text>
</comment>
<comment type="similarity">
    <text evidence="1">Belongs to the universal ribosomal protein uS4 family.</text>
</comment>
<reference key="1">
    <citation type="journal article" date="2003" name="Nat. Biotechnol.">
        <title>The genome sequence of the entomopathogenic bacterium Photorhabdus luminescens.</title>
        <authorList>
            <person name="Duchaud E."/>
            <person name="Rusniok C."/>
            <person name="Frangeul L."/>
            <person name="Buchrieser C."/>
            <person name="Givaudan A."/>
            <person name="Taourit S."/>
            <person name="Bocs S."/>
            <person name="Boursaux-Eude C."/>
            <person name="Chandler M."/>
            <person name="Charles J.-F."/>
            <person name="Dassa E."/>
            <person name="Derose R."/>
            <person name="Derzelle S."/>
            <person name="Freyssinet G."/>
            <person name="Gaudriault S."/>
            <person name="Medigue C."/>
            <person name="Lanois A."/>
            <person name="Powell K."/>
            <person name="Siguier P."/>
            <person name="Vincent R."/>
            <person name="Wingate V."/>
            <person name="Zouine M."/>
            <person name="Glaser P."/>
            <person name="Boemare N."/>
            <person name="Danchin A."/>
            <person name="Kunst F."/>
        </authorList>
    </citation>
    <scope>NUCLEOTIDE SEQUENCE [LARGE SCALE GENOMIC DNA]</scope>
    <source>
        <strain>DSM 15139 / CIP 105565 / TT01</strain>
    </source>
</reference>
<accession>Q7MYH4</accession>
<feature type="chain" id="PRO_0000132431" description="Small ribosomal subunit protein uS4">
    <location>
        <begin position="1"/>
        <end position="206"/>
    </location>
</feature>
<feature type="domain" description="S4 RNA-binding" evidence="1">
    <location>
        <begin position="96"/>
        <end position="156"/>
    </location>
</feature>
<organism>
    <name type="scientific">Photorhabdus laumondii subsp. laumondii (strain DSM 15139 / CIP 105565 / TT01)</name>
    <name type="common">Photorhabdus luminescens subsp. laumondii</name>
    <dbReference type="NCBI Taxonomy" id="243265"/>
    <lineage>
        <taxon>Bacteria</taxon>
        <taxon>Pseudomonadati</taxon>
        <taxon>Pseudomonadota</taxon>
        <taxon>Gammaproteobacteria</taxon>
        <taxon>Enterobacterales</taxon>
        <taxon>Morganellaceae</taxon>
        <taxon>Photorhabdus</taxon>
    </lineage>
</organism>
<name>RS4_PHOLL</name>
<keyword id="KW-1185">Reference proteome</keyword>
<keyword id="KW-0687">Ribonucleoprotein</keyword>
<keyword id="KW-0689">Ribosomal protein</keyword>
<keyword id="KW-0694">RNA-binding</keyword>
<keyword id="KW-0699">rRNA-binding</keyword>
<dbReference type="EMBL" id="BX571874">
    <property type="protein sequence ID" value="CAE17075.1"/>
    <property type="molecule type" value="Genomic_DNA"/>
</dbReference>
<dbReference type="RefSeq" id="WP_011148773.1">
    <property type="nucleotide sequence ID" value="NC_005126.1"/>
</dbReference>
<dbReference type="SMR" id="Q7MYH4"/>
<dbReference type="STRING" id="243265.plu4703"/>
<dbReference type="GeneID" id="88808134"/>
<dbReference type="KEGG" id="plu:plu4703"/>
<dbReference type="eggNOG" id="COG0522">
    <property type="taxonomic scope" value="Bacteria"/>
</dbReference>
<dbReference type="HOGENOM" id="CLU_092403_0_2_6"/>
<dbReference type="OrthoDB" id="9803672at2"/>
<dbReference type="Proteomes" id="UP000002514">
    <property type="component" value="Chromosome"/>
</dbReference>
<dbReference type="GO" id="GO:0015935">
    <property type="term" value="C:small ribosomal subunit"/>
    <property type="evidence" value="ECO:0007669"/>
    <property type="project" value="InterPro"/>
</dbReference>
<dbReference type="GO" id="GO:0019843">
    <property type="term" value="F:rRNA binding"/>
    <property type="evidence" value="ECO:0007669"/>
    <property type="project" value="UniProtKB-UniRule"/>
</dbReference>
<dbReference type="GO" id="GO:0003735">
    <property type="term" value="F:structural constituent of ribosome"/>
    <property type="evidence" value="ECO:0007669"/>
    <property type="project" value="InterPro"/>
</dbReference>
<dbReference type="GO" id="GO:0042274">
    <property type="term" value="P:ribosomal small subunit biogenesis"/>
    <property type="evidence" value="ECO:0007669"/>
    <property type="project" value="TreeGrafter"/>
</dbReference>
<dbReference type="GO" id="GO:0006412">
    <property type="term" value="P:translation"/>
    <property type="evidence" value="ECO:0007669"/>
    <property type="project" value="UniProtKB-UniRule"/>
</dbReference>
<dbReference type="CDD" id="cd00165">
    <property type="entry name" value="S4"/>
    <property type="match status" value="1"/>
</dbReference>
<dbReference type="FunFam" id="1.10.1050.10:FF:000001">
    <property type="entry name" value="30S ribosomal protein S4"/>
    <property type="match status" value="1"/>
</dbReference>
<dbReference type="FunFam" id="3.10.290.10:FF:000001">
    <property type="entry name" value="30S ribosomal protein S4"/>
    <property type="match status" value="1"/>
</dbReference>
<dbReference type="Gene3D" id="1.10.1050.10">
    <property type="entry name" value="Ribosomal Protein S4 Delta 41, Chain A, domain 1"/>
    <property type="match status" value="1"/>
</dbReference>
<dbReference type="Gene3D" id="3.10.290.10">
    <property type="entry name" value="RNA-binding S4 domain"/>
    <property type="match status" value="1"/>
</dbReference>
<dbReference type="HAMAP" id="MF_01306_B">
    <property type="entry name" value="Ribosomal_uS4_B"/>
    <property type="match status" value="1"/>
</dbReference>
<dbReference type="InterPro" id="IPR022801">
    <property type="entry name" value="Ribosomal_uS4"/>
</dbReference>
<dbReference type="InterPro" id="IPR005709">
    <property type="entry name" value="Ribosomal_uS4_bac-type"/>
</dbReference>
<dbReference type="InterPro" id="IPR018079">
    <property type="entry name" value="Ribosomal_uS4_CS"/>
</dbReference>
<dbReference type="InterPro" id="IPR001912">
    <property type="entry name" value="Ribosomal_uS4_N"/>
</dbReference>
<dbReference type="InterPro" id="IPR002942">
    <property type="entry name" value="S4_RNA-bd"/>
</dbReference>
<dbReference type="InterPro" id="IPR036986">
    <property type="entry name" value="S4_RNA-bd_sf"/>
</dbReference>
<dbReference type="NCBIfam" id="NF003717">
    <property type="entry name" value="PRK05327.1"/>
    <property type="match status" value="1"/>
</dbReference>
<dbReference type="NCBIfam" id="TIGR01017">
    <property type="entry name" value="rpsD_bact"/>
    <property type="match status" value="1"/>
</dbReference>
<dbReference type="PANTHER" id="PTHR11831">
    <property type="entry name" value="30S 40S RIBOSOMAL PROTEIN"/>
    <property type="match status" value="1"/>
</dbReference>
<dbReference type="PANTHER" id="PTHR11831:SF4">
    <property type="entry name" value="SMALL RIBOSOMAL SUBUNIT PROTEIN US4M"/>
    <property type="match status" value="1"/>
</dbReference>
<dbReference type="Pfam" id="PF00163">
    <property type="entry name" value="Ribosomal_S4"/>
    <property type="match status" value="1"/>
</dbReference>
<dbReference type="Pfam" id="PF01479">
    <property type="entry name" value="S4"/>
    <property type="match status" value="1"/>
</dbReference>
<dbReference type="SMART" id="SM01390">
    <property type="entry name" value="Ribosomal_S4"/>
    <property type="match status" value="1"/>
</dbReference>
<dbReference type="SMART" id="SM00363">
    <property type="entry name" value="S4"/>
    <property type="match status" value="1"/>
</dbReference>
<dbReference type="SUPFAM" id="SSF55174">
    <property type="entry name" value="Alpha-L RNA-binding motif"/>
    <property type="match status" value="1"/>
</dbReference>
<dbReference type="PROSITE" id="PS00632">
    <property type="entry name" value="RIBOSOMAL_S4"/>
    <property type="match status" value="1"/>
</dbReference>
<dbReference type="PROSITE" id="PS50889">
    <property type="entry name" value="S4"/>
    <property type="match status" value="1"/>
</dbReference>
<sequence>MARYLGPKLKLSRREGTDLFLKSGVRAIDTKCKLEQAPGQHGARKPRLSDYGVQLREKQKVRRIYGVLERQFRNYYKEATRLKGNTGENLLSLLEGRLDNVVYRMGFGATRAESRQMVSHKAIMVNGRVVNIASYQVSPNDVVSVREKSKKQSRIKAALELAEQREKPTWLEVDAVKMEGVFKRIPERADLSADINEHLIVELYSK</sequence>
<gene>
    <name evidence="1" type="primary">rpsD</name>
    <name type="ordered locus">plu4703</name>
</gene>
<protein>
    <recommendedName>
        <fullName evidence="1">Small ribosomal subunit protein uS4</fullName>
    </recommendedName>
    <alternativeName>
        <fullName evidence="2">30S ribosomal protein S4</fullName>
    </alternativeName>
</protein>
<proteinExistence type="inferred from homology"/>